<comment type="similarity">
    <text evidence="2">Belongs to the bacterial ribosomal protein bS21 family.</text>
</comment>
<keyword id="KW-1185">Reference proteome</keyword>
<keyword id="KW-0687">Ribonucleoprotein</keyword>
<keyword id="KW-0689">Ribosomal protein</keyword>
<accession>P48949</accession>
<name>RS21_SYNY3</name>
<evidence type="ECO:0000256" key="1">
    <source>
        <dbReference type="SAM" id="MobiDB-lite"/>
    </source>
</evidence>
<evidence type="ECO:0000305" key="2"/>
<sequence length="60" mass="7341">MTQVVVGQNEPIESALRRFKRQVAKAGIYTDFKKHQFFETPQEKHKRKEATRRRQRSRRR</sequence>
<feature type="chain" id="PRO_0000178394" description="Small ribosomal subunit protein bS21">
    <location>
        <begin position="1"/>
        <end position="60"/>
    </location>
</feature>
<feature type="region of interest" description="Disordered" evidence="1">
    <location>
        <begin position="36"/>
        <end position="60"/>
    </location>
</feature>
<feature type="compositionally biased region" description="Basic residues" evidence="1">
    <location>
        <begin position="44"/>
        <end position="60"/>
    </location>
</feature>
<reference key="1">
    <citation type="journal article" date="1995" name="DNA Res.">
        <title>Sequence analysis of the genome of the unicellular cyanobacterium Synechocystis sp. strain PCC6803. I. Sequence features in the 1 Mb region from map positions 64% to 92% of the genome.</title>
        <authorList>
            <person name="Kaneko T."/>
            <person name="Tanaka A."/>
            <person name="Sato S."/>
            <person name="Kotani H."/>
            <person name="Sazuka T."/>
            <person name="Miyajima N."/>
            <person name="Sugiura M."/>
            <person name="Tabata S."/>
        </authorList>
    </citation>
    <scope>NUCLEOTIDE SEQUENCE [LARGE SCALE GENOMIC DNA]</scope>
    <source>
        <strain>ATCC 27184 / PCC 6803 / N-1</strain>
    </source>
</reference>
<reference key="2">
    <citation type="journal article" date="1996" name="DNA Res.">
        <title>Sequence analysis of the genome of the unicellular cyanobacterium Synechocystis sp. strain PCC6803. II. Sequence determination of the entire genome and assignment of potential protein-coding regions.</title>
        <authorList>
            <person name="Kaneko T."/>
            <person name="Sato S."/>
            <person name="Kotani H."/>
            <person name="Tanaka A."/>
            <person name="Asamizu E."/>
            <person name="Nakamura Y."/>
            <person name="Miyajima N."/>
            <person name="Hirosawa M."/>
            <person name="Sugiura M."/>
            <person name="Sasamoto S."/>
            <person name="Kimura T."/>
            <person name="Hosouchi T."/>
            <person name="Matsuno A."/>
            <person name="Muraki A."/>
            <person name="Nakazaki N."/>
            <person name="Naruo K."/>
            <person name="Okumura S."/>
            <person name="Shimpo S."/>
            <person name="Takeuchi C."/>
            <person name="Wada T."/>
            <person name="Watanabe A."/>
            <person name="Yamada M."/>
            <person name="Yasuda M."/>
            <person name="Tabata S."/>
        </authorList>
    </citation>
    <scope>NUCLEOTIDE SEQUENCE [LARGE SCALE GENOMIC DNA]</scope>
    <source>
        <strain>ATCC 27184 / PCC 6803 / Kazusa</strain>
    </source>
</reference>
<protein>
    <recommendedName>
        <fullName evidence="2">Small ribosomal subunit protein bS21</fullName>
    </recommendedName>
    <alternativeName>
        <fullName>30S ribosomal protein S21</fullName>
    </alternativeName>
</protein>
<dbReference type="EMBL" id="BA000022">
    <property type="protein sequence ID" value="BAA10169.1"/>
    <property type="molecule type" value="Genomic_DNA"/>
</dbReference>
<dbReference type="PIR" id="S76317">
    <property type="entry name" value="S76317"/>
</dbReference>
<dbReference type="SMR" id="P48949"/>
<dbReference type="FunCoup" id="P48949">
    <property type="interactions" value="243"/>
</dbReference>
<dbReference type="STRING" id="1148.gene:10499662"/>
<dbReference type="PaxDb" id="1148-1001542"/>
<dbReference type="EnsemblBacteria" id="BAA10169">
    <property type="protein sequence ID" value="BAA10169"/>
    <property type="gene ID" value="BAA10169"/>
</dbReference>
<dbReference type="KEGG" id="syn:ssl0601"/>
<dbReference type="eggNOG" id="COG0828">
    <property type="taxonomic scope" value="Bacteria"/>
</dbReference>
<dbReference type="InParanoid" id="P48949"/>
<dbReference type="PhylomeDB" id="P48949"/>
<dbReference type="Proteomes" id="UP000001425">
    <property type="component" value="Chromosome"/>
</dbReference>
<dbReference type="GO" id="GO:1990904">
    <property type="term" value="C:ribonucleoprotein complex"/>
    <property type="evidence" value="ECO:0007669"/>
    <property type="project" value="UniProtKB-KW"/>
</dbReference>
<dbReference type="GO" id="GO:0005840">
    <property type="term" value="C:ribosome"/>
    <property type="evidence" value="ECO:0007669"/>
    <property type="project" value="UniProtKB-KW"/>
</dbReference>
<dbReference type="GO" id="GO:0003735">
    <property type="term" value="F:structural constituent of ribosome"/>
    <property type="evidence" value="ECO:0007669"/>
    <property type="project" value="InterPro"/>
</dbReference>
<dbReference type="GO" id="GO:0006412">
    <property type="term" value="P:translation"/>
    <property type="evidence" value="ECO:0007669"/>
    <property type="project" value="UniProtKB-UniRule"/>
</dbReference>
<dbReference type="Gene3D" id="1.20.5.1150">
    <property type="entry name" value="Ribosomal protein S8"/>
    <property type="match status" value="1"/>
</dbReference>
<dbReference type="HAMAP" id="MF_00358">
    <property type="entry name" value="Ribosomal_bS21"/>
    <property type="match status" value="1"/>
</dbReference>
<dbReference type="InterPro" id="IPR001911">
    <property type="entry name" value="Ribosomal_bS21"/>
</dbReference>
<dbReference type="InterPro" id="IPR018278">
    <property type="entry name" value="Ribosomal_bS21_CS"/>
</dbReference>
<dbReference type="InterPro" id="IPR038380">
    <property type="entry name" value="Ribosomal_bS21_sf"/>
</dbReference>
<dbReference type="NCBIfam" id="TIGR00030">
    <property type="entry name" value="S21p"/>
    <property type="match status" value="1"/>
</dbReference>
<dbReference type="PANTHER" id="PTHR21109">
    <property type="entry name" value="MITOCHONDRIAL 28S RIBOSOMAL PROTEIN S21"/>
    <property type="match status" value="1"/>
</dbReference>
<dbReference type="PANTHER" id="PTHR21109:SF0">
    <property type="entry name" value="SMALL RIBOSOMAL SUBUNIT PROTEIN BS21M"/>
    <property type="match status" value="1"/>
</dbReference>
<dbReference type="Pfam" id="PF01165">
    <property type="entry name" value="Ribosomal_S21"/>
    <property type="match status" value="1"/>
</dbReference>
<dbReference type="PRINTS" id="PR00976">
    <property type="entry name" value="RIBOSOMALS21"/>
</dbReference>
<dbReference type="PROSITE" id="PS01181">
    <property type="entry name" value="RIBOSOMAL_S21"/>
    <property type="match status" value="1"/>
</dbReference>
<organism>
    <name type="scientific">Synechocystis sp. (strain ATCC 27184 / PCC 6803 / Kazusa)</name>
    <dbReference type="NCBI Taxonomy" id="1111708"/>
    <lineage>
        <taxon>Bacteria</taxon>
        <taxon>Bacillati</taxon>
        <taxon>Cyanobacteriota</taxon>
        <taxon>Cyanophyceae</taxon>
        <taxon>Synechococcales</taxon>
        <taxon>Merismopediaceae</taxon>
        <taxon>Synechocystis</taxon>
    </lineage>
</organism>
<gene>
    <name type="primary">rpsU</name>
    <name type="synonym">rps21</name>
    <name type="ordered locus">ssl0601</name>
</gene>
<proteinExistence type="inferred from homology"/>